<reference key="1">
    <citation type="submission" date="2007-06" db="EMBL/GenBank/DDBJ databases">
        <title>Complete sequence of Methanococcus maripaludis C7.</title>
        <authorList>
            <consortium name="US DOE Joint Genome Institute"/>
            <person name="Copeland A."/>
            <person name="Lucas S."/>
            <person name="Lapidus A."/>
            <person name="Barry K."/>
            <person name="Glavina del Rio T."/>
            <person name="Dalin E."/>
            <person name="Tice H."/>
            <person name="Pitluck S."/>
            <person name="Clum A."/>
            <person name="Schmutz J."/>
            <person name="Larimer F."/>
            <person name="Land M."/>
            <person name="Hauser L."/>
            <person name="Kyrpides N."/>
            <person name="Anderson I."/>
            <person name="Sieprawska-Lupa M."/>
            <person name="Whitman W.B."/>
            <person name="Richardson P."/>
        </authorList>
    </citation>
    <scope>NUCLEOTIDE SEQUENCE [LARGE SCALE GENOMIC DNA]</scope>
    <source>
        <strain>C7 / ATCC BAA-1331</strain>
    </source>
</reference>
<evidence type="ECO:0000255" key="1">
    <source>
        <dbReference type="HAMAP-Rule" id="MF_01333"/>
    </source>
</evidence>
<evidence type="ECO:0000305" key="2"/>
<comment type="function">
    <text evidence="1">This is one of the proteins that bind and probably mediate the attachment of the 5S RNA into the large ribosomal subunit, where it forms part of the central protuberance. In the 70S ribosome it contacts protein S13 of the 30S subunit (bridge B1b), connecting the 2 subunits; this bridge is implicated in subunit movement. May contact the P site tRNA; the 5S rRNA and some of its associated proteins might help stabilize positioning of ribosome-bound tRNAs.</text>
</comment>
<comment type="subunit">
    <text evidence="1">Part of the 50S ribosomal subunit; contacts the 5S rRNA and probably tRNA. Forms a bridge to the 30S subunit in the 70S ribosome.</text>
</comment>
<comment type="similarity">
    <text evidence="1">Belongs to the universal ribosomal protein uL5 family.</text>
</comment>
<name>RL5_METM7</name>
<dbReference type="EMBL" id="CP000745">
    <property type="protein sequence ID" value="ABR65724.1"/>
    <property type="molecule type" value="Genomic_DNA"/>
</dbReference>
<dbReference type="SMR" id="A6VGZ8"/>
<dbReference type="STRING" id="426368.MmarC7_0657"/>
<dbReference type="KEGG" id="mmz:MmarC7_0657"/>
<dbReference type="eggNOG" id="arCOG04092">
    <property type="taxonomic scope" value="Archaea"/>
</dbReference>
<dbReference type="HOGENOM" id="CLU_061015_3_0_2"/>
<dbReference type="OrthoDB" id="372044at2157"/>
<dbReference type="GO" id="GO:1990904">
    <property type="term" value="C:ribonucleoprotein complex"/>
    <property type="evidence" value="ECO:0007669"/>
    <property type="project" value="UniProtKB-KW"/>
</dbReference>
<dbReference type="GO" id="GO:0005840">
    <property type="term" value="C:ribosome"/>
    <property type="evidence" value="ECO:0007669"/>
    <property type="project" value="UniProtKB-KW"/>
</dbReference>
<dbReference type="GO" id="GO:0019843">
    <property type="term" value="F:rRNA binding"/>
    <property type="evidence" value="ECO:0007669"/>
    <property type="project" value="UniProtKB-UniRule"/>
</dbReference>
<dbReference type="GO" id="GO:0003735">
    <property type="term" value="F:structural constituent of ribosome"/>
    <property type="evidence" value="ECO:0007669"/>
    <property type="project" value="InterPro"/>
</dbReference>
<dbReference type="GO" id="GO:0000049">
    <property type="term" value="F:tRNA binding"/>
    <property type="evidence" value="ECO:0007669"/>
    <property type="project" value="UniProtKB-UniRule"/>
</dbReference>
<dbReference type="GO" id="GO:0006412">
    <property type="term" value="P:translation"/>
    <property type="evidence" value="ECO:0007669"/>
    <property type="project" value="UniProtKB-UniRule"/>
</dbReference>
<dbReference type="FunFam" id="3.30.1440.10:FF:000002">
    <property type="entry name" value="60S ribosomal protein L11"/>
    <property type="match status" value="1"/>
</dbReference>
<dbReference type="Gene3D" id="3.30.1440.10">
    <property type="match status" value="1"/>
</dbReference>
<dbReference type="HAMAP" id="MF_01333_A">
    <property type="entry name" value="Ribosomal_uL5_A"/>
    <property type="match status" value="1"/>
</dbReference>
<dbReference type="InterPro" id="IPR002132">
    <property type="entry name" value="Ribosomal_uL5"/>
</dbReference>
<dbReference type="InterPro" id="IPR022804">
    <property type="entry name" value="Ribosomal_uL5_arc"/>
</dbReference>
<dbReference type="InterPro" id="IPR031309">
    <property type="entry name" value="Ribosomal_uL5_C"/>
</dbReference>
<dbReference type="InterPro" id="IPR020929">
    <property type="entry name" value="Ribosomal_uL5_CS"/>
</dbReference>
<dbReference type="InterPro" id="IPR022803">
    <property type="entry name" value="Ribosomal_uL5_dom_sf"/>
</dbReference>
<dbReference type="InterPro" id="IPR031310">
    <property type="entry name" value="Ribosomal_uL5_N"/>
</dbReference>
<dbReference type="NCBIfam" id="NF003258">
    <property type="entry name" value="PRK04219.1"/>
    <property type="match status" value="1"/>
</dbReference>
<dbReference type="PANTHER" id="PTHR11994">
    <property type="entry name" value="60S RIBOSOMAL PROTEIN L11-RELATED"/>
    <property type="match status" value="1"/>
</dbReference>
<dbReference type="Pfam" id="PF00281">
    <property type="entry name" value="Ribosomal_L5"/>
    <property type="match status" value="1"/>
</dbReference>
<dbReference type="Pfam" id="PF00673">
    <property type="entry name" value="Ribosomal_L5_C"/>
    <property type="match status" value="1"/>
</dbReference>
<dbReference type="PIRSF" id="PIRSF002161">
    <property type="entry name" value="Ribosomal_L5"/>
    <property type="match status" value="1"/>
</dbReference>
<dbReference type="SUPFAM" id="SSF55282">
    <property type="entry name" value="RL5-like"/>
    <property type="match status" value="1"/>
</dbReference>
<dbReference type="PROSITE" id="PS00358">
    <property type="entry name" value="RIBOSOMAL_L5"/>
    <property type="match status" value="1"/>
</dbReference>
<protein>
    <recommendedName>
        <fullName evidence="1">Large ribosomal subunit protein uL5</fullName>
    </recommendedName>
    <alternativeName>
        <fullName evidence="2">50S ribosomal protein L5</fullName>
    </alternativeName>
</protein>
<gene>
    <name evidence="1" type="primary">rpl5</name>
    <name type="ordered locus">MmarC7_0657</name>
</gene>
<accession>A6VGZ8</accession>
<sequence>MSFQEVWEKEPMKKPRIQKVTVNFGVGEAGDRLTIGAKVIEELTGQSPVRTLAKQTNPAFGIRKKLPIGLKVTLRGKNAEEFLGNAFSAFKTCGKVLYASSFDQVGNFSFGVPEHIDFPGQKYDPSIGIYGMDICVTFEKSGYRVKSRKVKRSHIPKKHLVTKDEAIEYIQAKFDTEVVRE</sequence>
<proteinExistence type="inferred from homology"/>
<keyword id="KW-0687">Ribonucleoprotein</keyword>
<keyword id="KW-0689">Ribosomal protein</keyword>
<keyword id="KW-0694">RNA-binding</keyword>
<keyword id="KW-0699">rRNA-binding</keyword>
<keyword id="KW-0820">tRNA-binding</keyword>
<organism>
    <name type="scientific">Methanococcus maripaludis (strain C7 / ATCC BAA-1331)</name>
    <dbReference type="NCBI Taxonomy" id="426368"/>
    <lineage>
        <taxon>Archaea</taxon>
        <taxon>Methanobacteriati</taxon>
        <taxon>Methanobacteriota</taxon>
        <taxon>Methanomada group</taxon>
        <taxon>Methanococci</taxon>
        <taxon>Methanococcales</taxon>
        <taxon>Methanococcaceae</taxon>
        <taxon>Methanococcus</taxon>
    </lineage>
</organism>
<feature type="chain" id="PRO_1000052772" description="Large ribosomal subunit protein uL5">
    <location>
        <begin position="1"/>
        <end position="181"/>
    </location>
</feature>